<organism>
    <name type="scientific">Pseudoalteromonas translucida (strain TAC 125)</name>
    <dbReference type="NCBI Taxonomy" id="326442"/>
    <lineage>
        <taxon>Bacteria</taxon>
        <taxon>Pseudomonadati</taxon>
        <taxon>Pseudomonadota</taxon>
        <taxon>Gammaproteobacteria</taxon>
        <taxon>Alteromonadales</taxon>
        <taxon>Pseudoalteromonadaceae</taxon>
        <taxon>Pseudoalteromonas</taxon>
    </lineage>
</organism>
<sequence>MRILGIESSCDETGIAIYDDEKGLLAHQLYSQVKVHADYGGVVPELASRDHVRKTLPLIDAAFAQAGCGPEDLDGVAYTAGPGLVGALLVGTSIGRSLAYGWDIPAVAVHHMEGHLLAPMLEENVPEFPFIALLVSGGHTMMVKVAGIGQYEVLGESVDDAAGEAFDKTAKLLGLDYPGGPRLAKMAEQGVAKRFIFPRPMTDKPGLDFSFSGLKTAASITIRENNDDEQTKADIAHAFQTAVIDTLVIKCKRALKQTGIKRLVIAGGVSANTQLRLQLERVMQGMKGQVYYPRTEFCTDNGAMIAYAGMQRLKAGQFATLDMKTKPRWPIDSLEAI</sequence>
<feature type="chain" id="PRO_0000303489" description="tRNA N6-adenosine threonylcarbamoyltransferase">
    <location>
        <begin position="1"/>
        <end position="337"/>
    </location>
</feature>
<feature type="binding site" evidence="1">
    <location>
        <position position="111"/>
    </location>
    <ligand>
        <name>Fe cation</name>
        <dbReference type="ChEBI" id="CHEBI:24875"/>
    </ligand>
</feature>
<feature type="binding site" evidence="1">
    <location>
        <position position="115"/>
    </location>
    <ligand>
        <name>Fe cation</name>
        <dbReference type="ChEBI" id="CHEBI:24875"/>
    </ligand>
</feature>
<feature type="binding site" evidence="1">
    <location>
        <begin position="134"/>
        <end position="138"/>
    </location>
    <ligand>
        <name>substrate</name>
    </ligand>
</feature>
<feature type="binding site" evidence="1">
    <location>
        <position position="167"/>
    </location>
    <ligand>
        <name>substrate</name>
    </ligand>
</feature>
<feature type="binding site" evidence="1">
    <location>
        <position position="180"/>
    </location>
    <ligand>
        <name>substrate</name>
    </ligand>
</feature>
<feature type="binding site" evidence="1">
    <location>
        <position position="272"/>
    </location>
    <ligand>
        <name>substrate</name>
    </ligand>
</feature>
<feature type="binding site" evidence="1">
    <location>
        <position position="300"/>
    </location>
    <ligand>
        <name>Fe cation</name>
        <dbReference type="ChEBI" id="CHEBI:24875"/>
    </ligand>
</feature>
<keyword id="KW-0012">Acyltransferase</keyword>
<keyword id="KW-0963">Cytoplasm</keyword>
<keyword id="KW-0408">Iron</keyword>
<keyword id="KW-0479">Metal-binding</keyword>
<keyword id="KW-1185">Reference proteome</keyword>
<keyword id="KW-0808">Transferase</keyword>
<keyword id="KW-0819">tRNA processing</keyword>
<accession>Q3IHX1</accession>
<protein>
    <recommendedName>
        <fullName evidence="1">tRNA N6-adenosine threonylcarbamoyltransferase</fullName>
        <ecNumber evidence="1">2.3.1.234</ecNumber>
    </recommendedName>
    <alternativeName>
        <fullName evidence="1">N6-L-threonylcarbamoyladenine synthase</fullName>
        <shortName evidence="1">t(6)A synthase</shortName>
    </alternativeName>
    <alternativeName>
        <fullName evidence="1">t(6)A37 threonylcarbamoyladenosine biosynthesis protein TsaD</fullName>
    </alternativeName>
    <alternativeName>
        <fullName evidence="1">tRNA threonylcarbamoyladenosine biosynthesis protein TsaD</fullName>
    </alternativeName>
</protein>
<name>TSAD_PSET1</name>
<gene>
    <name evidence="1" type="primary">tsaD</name>
    <name type="synonym">gcp</name>
    <name type="ordered locus">PSHAa2304</name>
</gene>
<evidence type="ECO:0000255" key="1">
    <source>
        <dbReference type="HAMAP-Rule" id="MF_01445"/>
    </source>
</evidence>
<dbReference type="EC" id="2.3.1.234" evidence="1"/>
<dbReference type="EMBL" id="CR954246">
    <property type="protein sequence ID" value="CAI87360.1"/>
    <property type="molecule type" value="Genomic_DNA"/>
</dbReference>
<dbReference type="SMR" id="Q3IHX1"/>
<dbReference type="STRING" id="326442.PSHAa2304"/>
<dbReference type="KEGG" id="pha:PSHAa2304"/>
<dbReference type="PATRIC" id="fig|326442.8.peg.2224"/>
<dbReference type="eggNOG" id="COG0533">
    <property type="taxonomic scope" value="Bacteria"/>
</dbReference>
<dbReference type="HOGENOM" id="CLU_023208_0_0_6"/>
<dbReference type="BioCyc" id="PHAL326442:PSHA_RS11365-MONOMER"/>
<dbReference type="Proteomes" id="UP000006843">
    <property type="component" value="Chromosome I"/>
</dbReference>
<dbReference type="GO" id="GO:0005737">
    <property type="term" value="C:cytoplasm"/>
    <property type="evidence" value="ECO:0007669"/>
    <property type="project" value="UniProtKB-SubCell"/>
</dbReference>
<dbReference type="GO" id="GO:0005506">
    <property type="term" value="F:iron ion binding"/>
    <property type="evidence" value="ECO:0007669"/>
    <property type="project" value="UniProtKB-UniRule"/>
</dbReference>
<dbReference type="GO" id="GO:0061711">
    <property type="term" value="F:N(6)-L-threonylcarbamoyladenine synthase activity"/>
    <property type="evidence" value="ECO:0007669"/>
    <property type="project" value="UniProtKB-EC"/>
</dbReference>
<dbReference type="GO" id="GO:0002949">
    <property type="term" value="P:tRNA threonylcarbamoyladenosine modification"/>
    <property type="evidence" value="ECO:0007669"/>
    <property type="project" value="UniProtKB-UniRule"/>
</dbReference>
<dbReference type="CDD" id="cd24133">
    <property type="entry name" value="ASKHA_NBD_TsaD_bac"/>
    <property type="match status" value="1"/>
</dbReference>
<dbReference type="FunFam" id="3.30.420.40:FF:000031">
    <property type="entry name" value="tRNA N6-adenosine threonylcarbamoyltransferase"/>
    <property type="match status" value="1"/>
</dbReference>
<dbReference type="Gene3D" id="3.30.420.40">
    <property type="match status" value="2"/>
</dbReference>
<dbReference type="HAMAP" id="MF_01445">
    <property type="entry name" value="TsaD"/>
    <property type="match status" value="1"/>
</dbReference>
<dbReference type="InterPro" id="IPR043129">
    <property type="entry name" value="ATPase_NBD"/>
</dbReference>
<dbReference type="InterPro" id="IPR000905">
    <property type="entry name" value="Gcp-like_dom"/>
</dbReference>
<dbReference type="InterPro" id="IPR017861">
    <property type="entry name" value="KAE1/TsaD"/>
</dbReference>
<dbReference type="InterPro" id="IPR017860">
    <property type="entry name" value="Peptidase_M22_CS"/>
</dbReference>
<dbReference type="InterPro" id="IPR022450">
    <property type="entry name" value="TsaD"/>
</dbReference>
<dbReference type="NCBIfam" id="TIGR00329">
    <property type="entry name" value="gcp_kae1"/>
    <property type="match status" value="1"/>
</dbReference>
<dbReference type="NCBIfam" id="TIGR03723">
    <property type="entry name" value="T6A_TsaD_YgjD"/>
    <property type="match status" value="1"/>
</dbReference>
<dbReference type="PANTHER" id="PTHR11735">
    <property type="entry name" value="TRNA N6-ADENOSINE THREONYLCARBAMOYLTRANSFERASE"/>
    <property type="match status" value="1"/>
</dbReference>
<dbReference type="PANTHER" id="PTHR11735:SF6">
    <property type="entry name" value="TRNA N6-ADENOSINE THREONYLCARBAMOYLTRANSFERASE, MITOCHONDRIAL"/>
    <property type="match status" value="1"/>
</dbReference>
<dbReference type="Pfam" id="PF00814">
    <property type="entry name" value="TsaD"/>
    <property type="match status" value="1"/>
</dbReference>
<dbReference type="PRINTS" id="PR00789">
    <property type="entry name" value="OSIALOPTASE"/>
</dbReference>
<dbReference type="SUPFAM" id="SSF53067">
    <property type="entry name" value="Actin-like ATPase domain"/>
    <property type="match status" value="2"/>
</dbReference>
<dbReference type="PROSITE" id="PS01016">
    <property type="entry name" value="GLYCOPROTEASE"/>
    <property type="match status" value="1"/>
</dbReference>
<proteinExistence type="inferred from homology"/>
<reference key="1">
    <citation type="journal article" date="2005" name="Genome Res.">
        <title>Coping with cold: the genome of the versatile marine Antarctica bacterium Pseudoalteromonas haloplanktis TAC125.</title>
        <authorList>
            <person name="Medigue C."/>
            <person name="Krin E."/>
            <person name="Pascal G."/>
            <person name="Barbe V."/>
            <person name="Bernsel A."/>
            <person name="Bertin P.N."/>
            <person name="Cheung F."/>
            <person name="Cruveiller S."/>
            <person name="D'Amico S."/>
            <person name="Duilio A."/>
            <person name="Fang G."/>
            <person name="Feller G."/>
            <person name="Ho C."/>
            <person name="Mangenot S."/>
            <person name="Marino G."/>
            <person name="Nilsson J."/>
            <person name="Parrilli E."/>
            <person name="Rocha E.P.C."/>
            <person name="Rouy Z."/>
            <person name="Sekowska A."/>
            <person name="Tutino M.L."/>
            <person name="Vallenet D."/>
            <person name="von Heijne G."/>
            <person name="Danchin A."/>
        </authorList>
    </citation>
    <scope>NUCLEOTIDE SEQUENCE [LARGE SCALE GENOMIC DNA]</scope>
    <source>
        <strain>TAC 125</strain>
    </source>
</reference>
<comment type="function">
    <text evidence="1">Required for the formation of a threonylcarbamoyl group on adenosine at position 37 (t(6)A37) in tRNAs that read codons beginning with adenine. Is involved in the transfer of the threonylcarbamoyl moiety of threonylcarbamoyl-AMP (TC-AMP) to the N6 group of A37, together with TsaE and TsaB. TsaD likely plays a direct catalytic role in this reaction.</text>
</comment>
<comment type="catalytic activity">
    <reaction evidence="1">
        <text>L-threonylcarbamoyladenylate + adenosine(37) in tRNA = N(6)-L-threonylcarbamoyladenosine(37) in tRNA + AMP + H(+)</text>
        <dbReference type="Rhea" id="RHEA:37059"/>
        <dbReference type="Rhea" id="RHEA-COMP:10162"/>
        <dbReference type="Rhea" id="RHEA-COMP:10163"/>
        <dbReference type="ChEBI" id="CHEBI:15378"/>
        <dbReference type="ChEBI" id="CHEBI:73682"/>
        <dbReference type="ChEBI" id="CHEBI:74411"/>
        <dbReference type="ChEBI" id="CHEBI:74418"/>
        <dbReference type="ChEBI" id="CHEBI:456215"/>
        <dbReference type="EC" id="2.3.1.234"/>
    </reaction>
</comment>
<comment type="cofactor">
    <cofactor evidence="1">
        <name>Fe(2+)</name>
        <dbReference type="ChEBI" id="CHEBI:29033"/>
    </cofactor>
    <text evidence="1">Binds 1 Fe(2+) ion per subunit.</text>
</comment>
<comment type="subcellular location">
    <subcellularLocation>
        <location evidence="1">Cytoplasm</location>
    </subcellularLocation>
</comment>
<comment type="similarity">
    <text evidence="1">Belongs to the KAE1 / TsaD family.</text>
</comment>